<evidence type="ECO:0000250" key="1"/>
<evidence type="ECO:0000305" key="2"/>
<protein>
    <recommendedName>
        <fullName>Allophycocyanin beta chain</fullName>
    </recommendedName>
</protein>
<name>APCB_PORPU</name>
<comment type="function">
    <text>Light-harvesting photosynthetic bile pigment-protein from the phycobiliprotein complex. Allophycocyanin has a maximum absorption at approximately 650 nanometers.</text>
</comment>
<comment type="subunit">
    <text evidence="1">Heterodimer of an alpha and a beta chain.</text>
</comment>
<comment type="subcellular location">
    <subcellularLocation>
        <location evidence="1">Plastid</location>
        <location evidence="1">Chloroplast thylakoid membrane</location>
        <topology evidence="1">Peripheral membrane protein</topology>
        <orientation evidence="1">Stromal side</orientation>
    </subcellularLocation>
    <text evidence="1">Forms the core of the phycobilisome.</text>
</comment>
<comment type="PTM">
    <text evidence="1">Contains one covalently linked phycocyanobilin chromophore.</text>
</comment>
<comment type="similarity">
    <text evidence="2">Belongs to the phycobiliprotein family.</text>
</comment>
<gene>
    <name type="primary">apcB</name>
</gene>
<geneLocation type="chloroplast"/>
<organism>
    <name type="scientific">Porphyra purpurea</name>
    <name type="common">Red seaweed</name>
    <name type="synonym">Ulva purpurea</name>
    <dbReference type="NCBI Taxonomy" id="2787"/>
    <lineage>
        <taxon>Eukaryota</taxon>
        <taxon>Rhodophyta</taxon>
        <taxon>Bangiophyceae</taxon>
        <taxon>Bangiales</taxon>
        <taxon>Bangiaceae</taxon>
        <taxon>Porphyra</taxon>
    </lineage>
</organism>
<proteinExistence type="inferred from homology"/>
<feature type="chain" id="PRO_0000199100" description="Allophycocyanin beta chain">
    <location>
        <begin position="1"/>
        <end position="161"/>
    </location>
</feature>
<feature type="binding site" description="covalent" evidence="1">
    <location>
        <position position="81"/>
    </location>
    <ligand>
        <name>(2R,3E)-phycocyanobilin</name>
        <dbReference type="ChEBI" id="CHEBI:85275"/>
    </ligand>
</feature>
<feature type="modified residue" description="N4-methylasparagine" evidence="1">
    <location>
        <position position="71"/>
    </location>
</feature>
<accession>P51261</accession>
<keyword id="KW-0042">Antenna complex</keyword>
<keyword id="KW-0089">Bile pigment</keyword>
<keyword id="KW-0150">Chloroplast</keyword>
<keyword id="KW-0157">Chromophore</keyword>
<keyword id="KW-0249">Electron transport</keyword>
<keyword id="KW-0472">Membrane</keyword>
<keyword id="KW-0488">Methylation</keyword>
<keyword id="KW-0602">Photosynthesis</keyword>
<keyword id="KW-0605">Phycobilisome</keyword>
<keyword id="KW-0934">Plastid</keyword>
<keyword id="KW-0793">Thylakoid</keyword>
<keyword id="KW-0813">Transport</keyword>
<reference key="1">
    <citation type="journal article" date="1995" name="Plant Mol. Biol. Rep.">
        <title>Complete nucleotide sequence of the Porphyra purpurea chloroplast genome.</title>
        <authorList>
            <person name="Reith M.E."/>
            <person name="Munholland J."/>
        </authorList>
    </citation>
    <scope>NUCLEOTIDE SEQUENCE [LARGE SCALE GENOMIC DNA]</scope>
    <source>
        <strain>Avonport</strain>
    </source>
</reference>
<sequence length="161" mass="17484">MQDAITSVINAADVQGKYLDDSSVEKLRGYFQTGELRVRAAATIAANAATIIKESVAKSLLYSDITRPGGNMYTTRRYAACIRDLDYYLRYATYGMLAGDPSILEERVLNGLKETYNSLGVPIGATIQAILAMKEVTISLVGPDAGKEMGLYFDYICSGLS</sequence>
<dbReference type="EMBL" id="U38804">
    <property type="protein sequence ID" value="AAC08147.1"/>
    <property type="molecule type" value="Genomic_DNA"/>
</dbReference>
<dbReference type="PIR" id="S73182">
    <property type="entry name" value="S73182"/>
</dbReference>
<dbReference type="RefSeq" id="NP_053871.1">
    <property type="nucleotide sequence ID" value="NC_000925.1"/>
</dbReference>
<dbReference type="SMR" id="P51261"/>
<dbReference type="GeneID" id="809890"/>
<dbReference type="GO" id="GO:0009535">
    <property type="term" value="C:chloroplast thylakoid membrane"/>
    <property type="evidence" value="ECO:0007669"/>
    <property type="project" value="UniProtKB-SubCell"/>
</dbReference>
<dbReference type="GO" id="GO:0030089">
    <property type="term" value="C:phycobilisome"/>
    <property type="evidence" value="ECO:0007669"/>
    <property type="project" value="UniProtKB-KW"/>
</dbReference>
<dbReference type="GO" id="GO:0015979">
    <property type="term" value="P:photosynthesis"/>
    <property type="evidence" value="ECO:0007669"/>
    <property type="project" value="UniProtKB-KW"/>
</dbReference>
<dbReference type="CDD" id="cd12126">
    <property type="entry name" value="APC_beta"/>
    <property type="match status" value="1"/>
</dbReference>
<dbReference type="Gene3D" id="1.10.490.20">
    <property type="entry name" value="Phycocyanins"/>
    <property type="match status" value="1"/>
</dbReference>
<dbReference type="InterPro" id="IPR006245">
    <property type="entry name" value="Allophycocyanin_b"/>
</dbReference>
<dbReference type="InterPro" id="IPR009050">
    <property type="entry name" value="Globin-like_sf"/>
</dbReference>
<dbReference type="InterPro" id="IPR012128">
    <property type="entry name" value="Phycobilisome_asu/bsu"/>
</dbReference>
<dbReference type="InterPro" id="IPR038719">
    <property type="entry name" value="Phycobilisome_asu/bsu_sf"/>
</dbReference>
<dbReference type="NCBIfam" id="TIGR01337">
    <property type="entry name" value="apcB"/>
    <property type="match status" value="1"/>
</dbReference>
<dbReference type="PANTHER" id="PTHR34011:SF3">
    <property type="entry name" value="ALLOPHYCOCYANIN BETA CHAIN"/>
    <property type="match status" value="1"/>
</dbReference>
<dbReference type="PANTHER" id="PTHR34011">
    <property type="entry name" value="PHYCOBILISOME 32.1 KDA LINKER POLYPEPTIDE, PHYCOCYANIN-ASSOCIATED, ROD 2-RELATED"/>
    <property type="match status" value="1"/>
</dbReference>
<dbReference type="Pfam" id="PF00502">
    <property type="entry name" value="Phycobilisome"/>
    <property type="match status" value="1"/>
</dbReference>
<dbReference type="PIRSF" id="PIRSF000081">
    <property type="entry name" value="Phycocyanin"/>
    <property type="match status" value="1"/>
</dbReference>
<dbReference type="SUPFAM" id="SSF46458">
    <property type="entry name" value="Globin-like"/>
    <property type="match status" value="1"/>
</dbReference>